<dbReference type="EMBL" id="DQ851108">
    <property type="protein sequence ID" value="ABG91402.1"/>
    <property type="molecule type" value="Genomic_DNA"/>
</dbReference>
<dbReference type="RefSeq" id="YP_778570.1">
    <property type="nucleotide sequence ID" value="NC_008408.1"/>
</dbReference>
<dbReference type="SMR" id="Q06J57"/>
<dbReference type="GeneID" id="4352987"/>
<dbReference type="GO" id="GO:0009507">
    <property type="term" value="C:chloroplast"/>
    <property type="evidence" value="ECO:0007669"/>
    <property type="project" value="UniProtKB-SubCell"/>
</dbReference>
<dbReference type="GO" id="GO:0005762">
    <property type="term" value="C:mitochondrial large ribosomal subunit"/>
    <property type="evidence" value="ECO:0007669"/>
    <property type="project" value="TreeGrafter"/>
</dbReference>
<dbReference type="GO" id="GO:0070180">
    <property type="term" value="F:large ribosomal subunit rRNA binding"/>
    <property type="evidence" value="ECO:0007669"/>
    <property type="project" value="TreeGrafter"/>
</dbReference>
<dbReference type="GO" id="GO:0003735">
    <property type="term" value="F:structural constituent of ribosome"/>
    <property type="evidence" value="ECO:0007669"/>
    <property type="project" value="InterPro"/>
</dbReference>
<dbReference type="GO" id="GO:0006412">
    <property type="term" value="P:translation"/>
    <property type="evidence" value="ECO:0007669"/>
    <property type="project" value="UniProtKB-UniRule"/>
</dbReference>
<dbReference type="CDD" id="cd00337">
    <property type="entry name" value="Ribosomal_uL14"/>
    <property type="match status" value="1"/>
</dbReference>
<dbReference type="Gene3D" id="2.40.150.20">
    <property type="entry name" value="Ribosomal protein L14"/>
    <property type="match status" value="1"/>
</dbReference>
<dbReference type="HAMAP" id="MF_01367">
    <property type="entry name" value="Ribosomal_uL14"/>
    <property type="match status" value="1"/>
</dbReference>
<dbReference type="InterPro" id="IPR000218">
    <property type="entry name" value="Ribosomal_uL14"/>
</dbReference>
<dbReference type="InterPro" id="IPR005745">
    <property type="entry name" value="Ribosomal_uL14_bac-type"/>
</dbReference>
<dbReference type="InterPro" id="IPR019972">
    <property type="entry name" value="Ribosomal_uL14_CS"/>
</dbReference>
<dbReference type="InterPro" id="IPR036853">
    <property type="entry name" value="Ribosomal_uL14_sf"/>
</dbReference>
<dbReference type="NCBIfam" id="TIGR01067">
    <property type="entry name" value="rplN_bact"/>
    <property type="match status" value="1"/>
</dbReference>
<dbReference type="PANTHER" id="PTHR11761">
    <property type="entry name" value="50S/60S RIBOSOMAL PROTEIN L14/L23"/>
    <property type="match status" value="1"/>
</dbReference>
<dbReference type="PANTHER" id="PTHR11761:SF3">
    <property type="entry name" value="LARGE RIBOSOMAL SUBUNIT PROTEIN UL14M"/>
    <property type="match status" value="1"/>
</dbReference>
<dbReference type="Pfam" id="PF00238">
    <property type="entry name" value="Ribosomal_L14"/>
    <property type="match status" value="1"/>
</dbReference>
<dbReference type="SMART" id="SM01374">
    <property type="entry name" value="Ribosomal_L14"/>
    <property type="match status" value="1"/>
</dbReference>
<dbReference type="SUPFAM" id="SSF50193">
    <property type="entry name" value="Ribosomal protein L14"/>
    <property type="match status" value="1"/>
</dbReference>
<dbReference type="PROSITE" id="PS00049">
    <property type="entry name" value="RIBOSOMAL_L14"/>
    <property type="match status" value="1"/>
</dbReference>
<sequence>MVQPQSRVKVVDNSGAKEIVCIRVLGKGRNQLSNIGDIIIGVVKEAIPNTPLKKSDIVRAVVVRTRKGLKRKNGIYIRFDDNAAVIVNKENNPRGTRIFGPVARELRDKSFMKIVSLAPEVI</sequence>
<protein>
    <recommendedName>
        <fullName evidence="2">Large ribosomal subunit protein uL14c</fullName>
    </recommendedName>
    <alternativeName>
        <fullName>50S ribosomal protein L14, chloroplastic</fullName>
    </alternativeName>
</protein>
<proteinExistence type="inferred from homology"/>
<keyword id="KW-0150">Chloroplast</keyword>
<keyword id="KW-0934">Plastid</keyword>
<keyword id="KW-0687">Ribonucleoprotein</keyword>
<keyword id="KW-0689">Ribosomal protein</keyword>
<keyword id="KW-0694">RNA-binding</keyword>
<keyword id="KW-0699">rRNA-binding</keyword>
<comment type="function">
    <text evidence="1">Binds to 23S rRNA.</text>
</comment>
<comment type="subunit">
    <text evidence="1">Part of the 50S ribosomal subunit.</text>
</comment>
<comment type="subcellular location">
    <subcellularLocation>
        <location>Plastid</location>
        <location>Chloroplast</location>
    </subcellularLocation>
</comment>
<comment type="similarity">
    <text evidence="2">Belongs to the universal ribosomal protein uL14 family.</text>
</comment>
<gene>
    <name type="primary">rpl14</name>
</gene>
<reference key="1">
    <citation type="journal article" date="2007" name="Mol. Biol. Evol.">
        <title>The complete chloroplast genome of the chlorarachniophyte Bigelowiella natans: evidence for independent origins of chlorarachniophyte and euglenid secondary endosymbionts.</title>
        <authorList>
            <person name="Rogers M.B."/>
            <person name="Gilson P.R."/>
            <person name="Su V."/>
            <person name="McFadden G.I."/>
            <person name="Keeling P.J."/>
        </authorList>
    </citation>
    <scope>NUCLEOTIDE SEQUENCE [LARGE SCALE GENOMIC DNA]</scope>
</reference>
<organism>
    <name type="scientific">Bigelowiella natans</name>
    <name type="common">Pedinomonas minutissima</name>
    <name type="synonym">Chlorarachnion sp. (strain CCMP621)</name>
    <dbReference type="NCBI Taxonomy" id="227086"/>
    <lineage>
        <taxon>Eukaryota</taxon>
        <taxon>Sar</taxon>
        <taxon>Rhizaria</taxon>
        <taxon>Cercozoa</taxon>
        <taxon>Chlorarachniophyceae</taxon>
        <taxon>Bigelowiella</taxon>
    </lineage>
</organism>
<feature type="chain" id="PRO_0000296338" description="Large ribosomal subunit protein uL14c">
    <location>
        <begin position="1"/>
        <end position="122"/>
    </location>
</feature>
<name>RK14_BIGNA</name>
<geneLocation type="chloroplast"/>
<evidence type="ECO:0000250" key="1"/>
<evidence type="ECO:0000305" key="2"/>
<accession>Q06J57</accession>